<name>MNMG_RUEPO</name>
<keyword id="KW-0963">Cytoplasm</keyword>
<keyword id="KW-0274">FAD</keyword>
<keyword id="KW-0285">Flavoprotein</keyword>
<keyword id="KW-0520">NAD</keyword>
<keyword id="KW-1185">Reference proteome</keyword>
<keyword id="KW-0819">tRNA processing</keyword>
<reference key="1">
    <citation type="journal article" date="2004" name="Nature">
        <title>Genome sequence of Silicibacter pomeroyi reveals adaptations to the marine environment.</title>
        <authorList>
            <person name="Moran M.A."/>
            <person name="Buchan A."/>
            <person name="Gonzalez J.M."/>
            <person name="Heidelberg J.F."/>
            <person name="Whitman W.B."/>
            <person name="Kiene R.P."/>
            <person name="Henriksen J.R."/>
            <person name="King G.M."/>
            <person name="Belas R."/>
            <person name="Fuqua C."/>
            <person name="Brinkac L.M."/>
            <person name="Lewis M."/>
            <person name="Johri S."/>
            <person name="Weaver B."/>
            <person name="Pai G."/>
            <person name="Eisen J.A."/>
            <person name="Rahe E."/>
            <person name="Sheldon W.M."/>
            <person name="Ye W."/>
            <person name="Miller T.R."/>
            <person name="Carlton J."/>
            <person name="Rasko D.A."/>
            <person name="Paulsen I.T."/>
            <person name="Ren Q."/>
            <person name="Daugherty S.C."/>
            <person name="DeBoy R.T."/>
            <person name="Dodson R.J."/>
            <person name="Durkin A.S."/>
            <person name="Madupu R."/>
            <person name="Nelson W.C."/>
            <person name="Sullivan S.A."/>
            <person name="Rosovitz M.J."/>
            <person name="Haft D.H."/>
            <person name="Selengut J."/>
            <person name="Ward N."/>
        </authorList>
    </citation>
    <scope>NUCLEOTIDE SEQUENCE [LARGE SCALE GENOMIC DNA]</scope>
    <source>
        <strain>ATCC 700808 / DSM 15171 / DSS-3</strain>
    </source>
</reference>
<reference key="2">
    <citation type="journal article" date="2014" name="Stand. Genomic Sci.">
        <title>An updated genome annotation for the model marine bacterium Ruegeria pomeroyi DSS-3.</title>
        <authorList>
            <person name="Rivers A.R."/>
            <person name="Smith C.B."/>
            <person name="Moran M.A."/>
        </authorList>
    </citation>
    <scope>GENOME REANNOTATION</scope>
    <source>
        <strain>ATCC 700808 / DSM 15171 / DSS-3</strain>
    </source>
</reference>
<gene>
    <name evidence="1" type="primary">mnmG</name>
    <name evidence="1" type="synonym">gidA</name>
    <name type="ordered locus">SPO0001</name>
</gene>
<protein>
    <recommendedName>
        <fullName evidence="1">tRNA uridine 5-carboxymethylaminomethyl modification enzyme MnmG</fullName>
    </recommendedName>
    <alternativeName>
        <fullName evidence="1">Glucose-inhibited division protein A</fullName>
    </alternativeName>
</protein>
<proteinExistence type="inferred from homology"/>
<comment type="function">
    <text evidence="1">NAD-binding protein involved in the addition of a carboxymethylaminomethyl (cmnm) group at the wobble position (U34) of certain tRNAs, forming tRNA-cmnm(5)s(2)U34.</text>
</comment>
<comment type="cofactor">
    <cofactor evidence="1">
        <name>FAD</name>
        <dbReference type="ChEBI" id="CHEBI:57692"/>
    </cofactor>
</comment>
<comment type="subunit">
    <text evidence="1">Homodimer. Heterotetramer of two MnmE and two MnmG subunits.</text>
</comment>
<comment type="subcellular location">
    <subcellularLocation>
        <location evidence="1">Cytoplasm</location>
    </subcellularLocation>
</comment>
<comment type="similarity">
    <text evidence="1">Belongs to the MnmG family.</text>
</comment>
<organism>
    <name type="scientific">Ruegeria pomeroyi (strain ATCC 700808 / DSM 15171 / DSS-3)</name>
    <name type="common">Silicibacter pomeroyi</name>
    <dbReference type="NCBI Taxonomy" id="246200"/>
    <lineage>
        <taxon>Bacteria</taxon>
        <taxon>Pseudomonadati</taxon>
        <taxon>Pseudomonadota</taxon>
        <taxon>Alphaproteobacteria</taxon>
        <taxon>Rhodobacterales</taxon>
        <taxon>Roseobacteraceae</taxon>
        <taxon>Ruegeria</taxon>
    </lineage>
</organism>
<dbReference type="EMBL" id="CP000031">
    <property type="protein sequence ID" value="AAV93332.1"/>
    <property type="molecule type" value="Genomic_DNA"/>
</dbReference>
<dbReference type="RefSeq" id="WP_011045773.1">
    <property type="nucleotide sequence ID" value="NC_003911.12"/>
</dbReference>
<dbReference type="SMR" id="Q5LWF3"/>
<dbReference type="STRING" id="246200.SPO0001"/>
<dbReference type="PaxDb" id="246200-SPO0001"/>
<dbReference type="KEGG" id="sil:SPO0001"/>
<dbReference type="eggNOG" id="COG0445">
    <property type="taxonomic scope" value="Bacteria"/>
</dbReference>
<dbReference type="HOGENOM" id="CLU_007831_2_2_5"/>
<dbReference type="OrthoDB" id="9815560at2"/>
<dbReference type="Proteomes" id="UP000001023">
    <property type="component" value="Chromosome"/>
</dbReference>
<dbReference type="GO" id="GO:0005829">
    <property type="term" value="C:cytosol"/>
    <property type="evidence" value="ECO:0007669"/>
    <property type="project" value="TreeGrafter"/>
</dbReference>
<dbReference type="GO" id="GO:0050660">
    <property type="term" value="F:flavin adenine dinucleotide binding"/>
    <property type="evidence" value="ECO:0007669"/>
    <property type="project" value="UniProtKB-UniRule"/>
</dbReference>
<dbReference type="GO" id="GO:0030488">
    <property type="term" value="P:tRNA methylation"/>
    <property type="evidence" value="ECO:0007669"/>
    <property type="project" value="TreeGrafter"/>
</dbReference>
<dbReference type="GO" id="GO:0002098">
    <property type="term" value="P:tRNA wobble uridine modification"/>
    <property type="evidence" value="ECO:0007669"/>
    <property type="project" value="InterPro"/>
</dbReference>
<dbReference type="FunFam" id="3.50.50.60:FF:000082">
    <property type="entry name" value="protein MTO1 homolog, mitochondrial isoform X1"/>
    <property type="match status" value="1"/>
</dbReference>
<dbReference type="FunFam" id="1.10.150.570:FF:000001">
    <property type="entry name" value="tRNA uridine 5-carboxymethylaminomethyl modification enzyme MnmG"/>
    <property type="match status" value="1"/>
</dbReference>
<dbReference type="FunFam" id="3.50.50.60:FF:000002">
    <property type="entry name" value="tRNA uridine 5-carboxymethylaminomethyl modification enzyme MnmG"/>
    <property type="match status" value="1"/>
</dbReference>
<dbReference type="Gene3D" id="3.50.50.60">
    <property type="entry name" value="FAD/NAD(P)-binding domain"/>
    <property type="match status" value="2"/>
</dbReference>
<dbReference type="Gene3D" id="1.10.150.570">
    <property type="entry name" value="GidA associated domain, C-terminal subdomain"/>
    <property type="match status" value="1"/>
</dbReference>
<dbReference type="Gene3D" id="1.10.10.1800">
    <property type="entry name" value="tRNA uridine 5-carboxymethylaminomethyl modification enzyme MnmG/GidA"/>
    <property type="match status" value="1"/>
</dbReference>
<dbReference type="HAMAP" id="MF_00129">
    <property type="entry name" value="MnmG_GidA"/>
    <property type="match status" value="1"/>
</dbReference>
<dbReference type="InterPro" id="IPR036188">
    <property type="entry name" value="FAD/NAD-bd_sf"/>
</dbReference>
<dbReference type="InterPro" id="IPR049312">
    <property type="entry name" value="GIDA_C_N"/>
</dbReference>
<dbReference type="InterPro" id="IPR004416">
    <property type="entry name" value="MnmG"/>
</dbReference>
<dbReference type="InterPro" id="IPR002218">
    <property type="entry name" value="MnmG-rel"/>
</dbReference>
<dbReference type="InterPro" id="IPR020595">
    <property type="entry name" value="MnmG-rel_CS"/>
</dbReference>
<dbReference type="InterPro" id="IPR026904">
    <property type="entry name" value="MnmG_C"/>
</dbReference>
<dbReference type="InterPro" id="IPR047001">
    <property type="entry name" value="MnmG_C_subdom"/>
</dbReference>
<dbReference type="InterPro" id="IPR044920">
    <property type="entry name" value="MnmG_C_subdom_sf"/>
</dbReference>
<dbReference type="InterPro" id="IPR040131">
    <property type="entry name" value="MnmG_N"/>
</dbReference>
<dbReference type="NCBIfam" id="TIGR00136">
    <property type="entry name" value="mnmG_gidA"/>
    <property type="match status" value="1"/>
</dbReference>
<dbReference type="PANTHER" id="PTHR11806">
    <property type="entry name" value="GLUCOSE INHIBITED DIVISION PROTEIN A"/>
    <property type="match status" value="1"/>
</dbReference>
<dbReference type="PANTHER" id="PTHR11806:SF0">
    <property type="entry name" value="PROTEIN MTO1 HOMOLOG, MITOCHONDRIAL"/>
    <property type="match status" value="1"/>
</dbReference>
<dbReference type="Pfam" id="PF01134">
    <property type="entry name" value="GIDA"/>
    <property type="match status" value="1"/>
</dbReference>
<dbReference type="Pfam" id="PF21680">
    <property type="entry name" value="GIDA_C_1st"/>
    <property type="match status" value="1"/>
</dbReference>
<dbReference type="Pfam" id="PF13932">
    <property type="entry name" value="SAM_GIDA_C"/>
    <property type="match status" value="1"/>
</dbReference>
<dbReference type="PRINTS" id="PR00411">
    <property type="entry name" value="PNDRDTASEI"/>
</dbReference>
<dbReference type="SMART" id="SM01228">
    <property type="entry name" value="GIDA_assoc_3"/>
    <property type="match status" value="1"/>
</dbReference>
<dbReference type="SUPFAM" id="SSF51905">
    <property type="entry name" value="FAD/NAD(P)-binding domain"/>
    <property type="match status" value="1"/>
</dbReference>
<dbReference type="PROSITE" id="PS01280">
    <property type="entry name" value="GIDA_1"/>
    <property type="match status" value="1"/>
</dbReference>
<dbReference type="PROSITE" id="PS01281">
    <property type="entry name" value="GIDA_2"/>
    <property type="match status" value="1"/>
</dbReference>
<feature type="chain" id="PRO_0000117174" description="tRNA uridine 5-carboxymethylaminomethyl modification enzyme MnmG">
    <location>
        <begin position="1"/>
        <end position="622"/>
    </location>
</feature>
<feature type="binding site" evidence="1">
    <location>
        <begin position="12"/>
        <end position="17"/>
    </location>
    <ligand>
        <name>FAD</name>
        <dbReference type="ChEBI" id="CHEBI:57692"/>
    </ligand>
</feature>
<feature type="binding site" evidence="1">
    <location>
        <position position="124"/>
    </location>
    <ligand>
        <name>FAD</name>
        <dbReference type="ChEBI" id="CHEBI:57692"/>
    </ligand>
</feature>
<feature type="binding site" evidence="1">
    <location>
        <position position="179"/>
    </location>
    <ligand>
        <name>FAD</name>
        <dbReference type="ChEBI" id="CHEBI:57692"/>
    </ligand>
</feature>
<feature type="binding site" evidence="1">
    <location>
        <begin position="271"/>
        <end position="285"/>
    </location>
    <ligand>
        <name>NAD(+)</name>
        <dbReference type="ChEBI" id="CHEBI:57540"/>
    </ligand>
</feature>
<feature type="binding site" evidence="1">
    <location>
        <position position="368"/>
    </location>
    <ligand>
        <name>FAD</name>
        <dbReference type="ChEBI" id="CHEBI:57692"/>
    </ligand>
</feature>
<sequence>MKHSDFDIVVIGAGHAGAEAAHAAARMGMRTALVSLSERDIGVMSCNPAIGGLGKGHLVREIDALDGVMGRVADKAGIQFRLLNRRKGPAVQGPRAQADRKLYRLAMQEEMRNRPGLTIVEGEVTDFRMQGDRVAGVVLADGSEIASQAVILTSGTFLRGIIHIGDVSRPGGRMGDRPSVPLAERLDGFALPMGRLKTGTPPRLDGRTIDWSILERQDGDDDPVLFSFLSKGAYARQIACGITHTNAQTHEIIRKNLSRSAMYGGHIEGVGPRYCPSIEDKIVRFADKDSHQIFLEPEGLEDHTVYPNGISTSLPVDVQEDYVRSIRGLEQVEILQPGYAIEYDYVDPRALTSQLSLPNVPGLYLAGQINGTTGYEEAAAQGMVAGLNAATAILGHEPVPFSRANSYIGVMIDDLTTRGVAEPYRMFTSRAEFRLSLRADNADQRLTPLGLELGCVGDERRDVFARKAEKLATASALLDQSSFSPKEIATAGITISQDGNRRNGFAVLAFPDVRFDDLVPLIPELADTDAETRAQVERDALYANYIARQERDVEAMKRDEALVIPIDFNFSALDGLSNELKQKLTSARPENIAQAGRVEGMTPAALALILARLRRGDRARSA</sequence>
<accession>Q5LWF3</accession>
<evidence type="ECO:0000255" key="1">
    <source>
        <dbReference type="HAMAP-Rule" id="MF_00129"/>
    </source>
</evidence>